<gene>
    <name evidence="1" type="primary">clpX</name>
    <name type="ordered locus">Sare_3876</name>
</gene>
<evidence type="ECO:0000255" key="1">
    <source>
        <dbReference type="HAMAP-Rule" id="MF_00175"/>
    </source>
</evidence>
<evidence type="ECO:0000255" key="2">
    <source>
        <dbReference type="PROSITE-ProRule" id="PRU01250"/>
    </source>
</evidence>
<proteinExistence type="inferred from homology"/>
<dbReference type="EMBL" id="CP000850">
    <property type="protein sequence ID" value="ABV99668.1"/>
    <property type="molecule type" value="Genomic_DNA"/>
</dbReference>
<dbReference type="SMR" id="A8M1K7"/>
<dbReference type="STRING" id="391037.Sare_3876"/>
<dbReference type="KEGG" id="saq:Sare_3876"/>
<dbReference type="PATRIC" id="fig|391037.6.peg.3908"/>
<dbReference type="eggNOG" id="COG1219">
    <property type="taxonomic scope" value="Bacteria"/>
</dbReference>
<dbReference type="HOGENOM" id="CLU_014218_8_2_11"/>
<dbReference type="OrthoDB" id="9804062at2"/>
<dbReference type="GO" id="GO:0009376">
    <property type="term" value="C:HslUV protease complex"/>
    <property type="evidence" value="ECO:0007669"/>
    <property type="project" value="TreeGrafter"/>
</dbReference>
<dbReference type="GO" id="GO:0005524">
    <property type="term" value="F:ATP binding"/>
    <property type="evidence" value="ECO:0007669"/>
    <property type="project" value="UniProtKB-UniRule"/>
</dbReference>
<dbReference type="GO" id="GO:0016887">
    <property type="term" value="F:ATP hydrolysis activity"/>
    <property type="evidence" value="ECO:0007669"/>
    <property type="project" value="InterPro"/>
</dbReference>
<dbReference type="GO" id="GO:0140662">
    <property type="term" value="F:ATP-dependent protein folding chaperone"/>
    <property type="evidence" value="ECO:0007669"/>
    <property type="project" value="InterPro"/>
</dbReference>
<dbReference type="GO" id="GO:0046983">
    <property type="term" value="F:protein dimerization activity"/>
    <property type="evidence" value="ECO:0007669"/>
    <property type="project" value="InterPro"/>
</dbReference>
<dbReference type="GO" id="GO:0051082">
    <property type="term" value="F:unfolded protein binding"/>
    <property type="evidence" value="ECO:0007669"/>
    <property type="project" value="UniProtKB-UniRule"/>
</dbReference>
<dbReference type="GO" id="GO:0008270">
    <property type="term" value="F:zinc ion binding"/>
    <property type="evidence" value="ECO:0007669"/>
    <property type="project" value="InterPro"/>
</dbReference>
<dbReference type="GO" id="GO:0051301">
    <property type="term" value="P:cell division"/>
    <property type="evidence" value="ECO:0007669"/>
    <property type="project" value="TreeGrafter"/>
</dbReference>
<dbReference type="GO" id="GO:0051603">
    <property type="term" value="P:proteolysis involved in protein catabolic process"/>
    <property type="evidence" value="ECO:0007669"/>
    <property type="project" value="TreeGrafter"/>
</dbReference>
<dbReference type="CDD" id="cd19497">
    <property type="entry name" value="RecA-like_ClpX"/>
    <property type="match status" value="1"/>
</dbReference>
<dbReference type="FunFam" id="1.10.8.60:FF:000002">
    <property type="entry name" value="ATP-dependent Clp protease ATP-binding subunit ClpX"/>
    <property type="match status" value="1"/>
</dbReference>
<dbReference type="FunFam" id="3.40.50.300:FF:000005">
    <property type="entry name" value="ATP-dependent Clp protease ATP-binding subunit ClpX"/>
    <property type="match status" value="1"/>
</dbReference>
<dbReference type="Gene3D" id="1.10.8.60">
    <property type="match status" value="1"/>
</dbReference>
<dbReference type="Gene3D" id="6.20.220.10">
    <property type="entry name" value="ClpX chaperone, C4-type zinc finger domain"/>
    <property type="match status" value="1"/>
</dbReference>
<dbReference type="Gene3D" id="3.40.50.300">
    <property type="entry name" value="P-loop containing nucleotide triphosphate hydrolases"/>
    <property type="match status" value="1"/>
</dbReference>
<dbReference type="HAMAP" id="MF_00175">
    <property type="entry name" value="ClpX"/>
    <property type="match status" value="1"/>
</dbReference>
<dbReference type="InterPro" id="IPR003593">
    <property type="entry name" value="AAA+_ATPase"/>
</dbReference>
<dbReference type="InterPro" id="IPR050052">
    <property type="entry name" value="ATP-dep_Clp_protease_ClpX"/>
</dbReference>
<dbReference type="InterPro" id="IPR003959">
    <property type="entry name" value="ATPase_AAA_core"/>
</dbReference>
<dbReference type="InterPro" id="IPR019489">
    <property type="entry name" value="Clp_ATPase_C"/>
</dbReference>
<dbReference type="InterPro" id="IPR004487">
    <property type="entry name" value="Clp_protease_ATP-bd_su_ClpX"/>
</dbReference>
<dbReference type="InterPro" id="IPR046425">
    <property type="entry name" value="ClpX_bact"/>
</dbReference>
<dbReference type="InterPro" id="IPR027417">
    <property type="entry name" value="P-loop_NTPase"/>
</dbReference>
<dbReference type="InterPro" id="IPR010603">
    <property type="entry name" value="Znf_CppX_C4"/>
</dbReference>
<dbReference type="InterPro" id="IPR038366">
    <property type="entry name" value="Znf_CppX_C4_sf"/>
</dbReference>
<dbReference type="NCBIfam" id="TIGR00382">
    <property type="entry name" value="clpX"/>
    <property type="match status" value="1"/>
</dbReference>
<dbReference type="NCBIfam" id="NF003745">
    <property type="entry name" value="PRK05342.1"/>
    <property type="match status" value="1"/>
</dbReference>
<dbReference type="PANTHER" id="PTHR48102:SF7">
    <property type="entry name" value="ATP-DEPENDENT CLP PROTEASE ATP-BINDING SUBUNIT CLPX-LIKE, MITOCHONDRIAL"/>
    <property type="match status" value="1"/>
</dbReference>
<dbReference type="PANTHER" id="PTHR48102">
    <property type="entry name" value="ATP-DEPENDENT CLP PROTEASE ATP-BINDING SUBUNIT CLPX-LIKE, MITOCHONDRIAL-RELATED"/>
    <property type="match status" value="1"/>
</dbReference>
<dbReference type="Pfam" id="PF07724">
    <property type="entry name" value="AAA_2"/>
    <property type="match status" value="1"/>
</dbReference>
<dbReference type="Pfam" id="PF10431">
    <property type="entry name" value="ClpB_D2-small"/>
    <property type="match status" value="1"/>
</dbReference>
<dbReference type="Pfam" id="PF06689">
    <property type="entry name" value="zf-C4_ClpX"/>
    <property type="match status" value="1"/>
</dbReference>
<dbReference type="SMART" id="SM00382">
    <property type="entry name" value="AAA"/>
    <property type="match status" value="1"/>
</dbReference>
<dbReference type="SMART" id="SM01086">
    <property type="entry name" value="ClpB_D2-small"/>
    <property type="match status" value="1"/>
</dbReference>
<dbReference type="SMART" id="SM00994">
    <property type="entry name" value="zf-C4_ClpX"/>
    <property type="match status" value="1"/>
</dbReference>
<dbReference type="SUPFAM" id="SSF57716">
    <property type="entry name" value="Glucocorticoid receptor-like (DNA-binding domain)"/>
    <property type="match status" value="1"/>
</dbReference>
<dbReference type="SUPFAM" id="SSF52540">
    <property type="entry name" value="P-loop containing nucleoside triphosphate hydrolases"/>
    <property type="match status" value="1"/>
</dbReference>
<dbReference type="PROSITE" id="PS51902">
    <property type="entry name" value="CLPX_ZB"/>
    <property type="match status" value="1"/>
</dbReference>
<name>CLPX_SALAI</name>
<comment type="function">
    <text evidence="1">ATP-dependent specificity component of the Clp protease. It directs the protease to specific substrates. Can perform chaperone functions in the absence of ClpP.</text>
</comment>
<comment type="subunit">
    <text evidence="1">Component of the ClpX-ClpP complex. Forms a hexameric ring that, in the presence of ATP, binds to fourteen ClpP subunits assembled into a disk-like structure with a central cavity, resembling the structure of eukaryotic proteasomes.</text>
</comment>
<comment type="similarity">
    <text evidence="1">Belongs to the ClpX chaperone family.</text>
</comment>
<organism>
    <name type="scientific">Salinispora arenicola (strain CNS-205)</name>
    <dbReference type="NCBI Taxonomy" id="391037"/>
    <lineage>
        <taxon>Bacteria</taxon>
        <taxon>Bacillati</taxon>
        <taxon>Actinomycetota</taxon>
        <taxon>Actinomycetes</taxon>
        <taxon>Micromonosporales</taxon>
        <taxon>Micromonosporaceae</taxon>
        <taxon>Salinispora</taxon>
    </lineage>
</organism>
<keyword id="KW-0067">ATP-binding</keyword>
<keyword id="KW-0143">Chaperone</keyword>
<keyword id="KW-0479">Metal-binding</keyword>
<keyword id="KW-0547">Nucleotide-binding</keyword>
<keyword id="KW-0862">Zinc</keyword>
<protein>
    <recommendedName>
        <fullName evidence="1">ATP-dependent Clp protease ATP-binding subunit ClpX</fullName>
    </recommendedName>
</protein>
<sequence length="429" mass="47018">MARIGDGGDLLKCSFCGKSQKQVKKLIAGPGVYICDECIDLCNEIIEEELAESGEVKWEELPKPMEICQFLDNYVVGQAQAKKALAVAVYNHYKRIQAEAVGAPGTDSVELAKSNILLLGPTGCGKTHLAQTLARMLNVPFAIADATALTEAGYVGEDVENILLKLIQAADYDIKRAETGIIYIDEVDKIARKSENPSITRDVSGEGVQQALLKMLEGTVANVPPQGGRKHPHQEFIQIDTTNVLFICGGAFAGLDQIIEARTGHGGTGFGARLRAVSERSTDDTFSQVMPEDMLKFGLIPEFIGRLPVITNVRSLDRSALVRILTEPRNALVRQYQRLFELDGVELEFEQPALEAVADQAMLRGTGARGLRAIMEEVLLSVMYEVPSNPDAARVLITREVVLENVNPTIVPREFTGRRARREREEKSA</sequence>
<reference key="1">
    <citation type="submission" date="2007-10" db="EMBL/GenBank/DDBJ databases">
        <title>Complete sequence of Salinispora arenicola CNS-205.</title>
        <authorList>
            <consortium name="US DOE Joint Genome Institute"/>
            <person name="Copeland A."/>
            <person name="Lucas S."/>
            <person name="Lapidus A."/>
            <person name="Barry K."/>
            <person name="Glavina del Rio T."/>
            <person name="Dalin E."/>
            <person name="Tice H."/>
            <person name="Pitluck S."/>
            <person name="Foster B."/>
            <person name="Schmutz J."/>
            <person name="Larimer F."/>
            <person name="Land M."/>
            <person name="Hauser L."/>
            <person name="Kyrpides N."/>
            <person name="Ivanova N."/>
            <person name="Jensen P.R."/>
            <person name="Moore B.S."/>
            <person name="Penn K."/>
            <person name="Jenkins C."/>
            <person name="Udwary D."/>
            <person name="Xiang L."/>
            <person name="Gontang E."/>
            <person name="Richardson P."/>
        </authorList>
    </citation>
    <scope>NUCLEOTIDE SEQUENCE [LARGE SCALE GENOMIC DNA]</scope>
    <source>
        <strain>CNS-205</strain>
    </source>
</reference>
<feature type="chain" id="PRO_1000077171" description="ATP-dependent Clp protease ATP-binding subunit ClpX">
    <location>
        <begin position="1"/>
        <end position="429"/>
    </location>
</feature>
<feature type="domain" description="ClpX-type ZB" evidence="2">
    <location>
        <begin position="1"/>
        <end position="54"/>
    </location>
</feature>
<feature type="binding site" evidence="2">
    <location>
        <position position="13"/>
    </location>
    <ligand>
        <name>Zn(2+)</name>
        <dbReference type="ChEBI" id="CHEBI:29105"/>
    </ligand>
</feature>
<feature type="binding site" evidence="2">
    <location>
        <position position="16"/>
    </location>
    <ligand>
        <name>Zn(2+)</name>
        <dbReference type="ChEBI" id="CHEBI:29105"/>
    </ligand>
</feature>
<feature type="binding site" evidence="2">
    <location>
        <position position="35"/>
    </location>
    <ligand>
        <name>Zn(2+)</name>
        <dbReference type="ChEBI" id="CHEBI:29105"/>
    </ligand>
</feature>
<feature type="binding site" evidence="2">
    <location>
        <position position="38"/>
    </location>
    <ligand>
        <name>Zn(2+)</name>
        <dbReference type="ChEBI" id="CHEBI:29105"/>
    </ligand>
</feature>
<accession>A8M1K7</accession>